<dbReference type="EC" id="2.2.1.2" evidence="1"/>
<dbReference type="EMBL" id="CP000804">
    <property type="protein sequence ID" value="ABU56548.1"/>
    <property type="molecule type" value="Genomic_DNA"/>
</dbReference>
<dbReference type="RefSeq" id="WP_011997951.1">
    <property type="nucleotide sequence ID" value="NC_009767.1"/>
</dbReference>
<dbReference type="SMR" id="A7NGG1"/>
<dbReference type="STRING" id="383372.Rcas_0417"/>
<dbReference type="KEGG" id="rca:Rcas_0417"/>
<dbReference type="eggNOG" id="COG0176">
    <property type="taxonomic scope" value="Bacteria"/>
</dbReference>
<dbReference type="HOGENOM" id="CLU_079764_0_0_0"/>
<dbReference type="OrthoDB" id="9807051at2"/>
<dbReference type="UniPathway" id="UPA00115">
    <property type="reaction ID" value="UER00414"/>
</dbReference>
<dbReference type="Proteomes" id="UP000000263">
    <property type="component" value="Chromosome"/>
</dbReference>
<dbReference type="GO" id="GO:0005737">
    <property type="term" value="C:cytoplasm"/>
    <property type="evidence" value="ECO:0007669"/>
    <property type="project" value="UniProtKB-SubCell"/>
</dbReference>
<dbReference type="GO" id="GO:0016832">
    <property type="term" value="F:aldehyde-lyase activity"/>
    <property type="evidence" value="ECO:0007669"/>
    <property type="project" value="InterPro"/>
</dbReference>
<dbReference type="GO" id="GO:0004801">
    <property type="term" value="F:transaldolase activity"/>
    <property type="evidence" value="ECO:0007669"/>
    <property type="project" value="UniProtKB-UniRule"/>
</dbReference>
<dbReference type="GO" id="GO:0005975">
    <property type="term" value="P:carbohydrate metabolic process"/>
    <property type="evidence" value="ECO:0007669"/>
    <property type="project" value="InterPro"/>
</dbReference>
<dbReference type="GO" id="GO:0006098">
    <property type="term" value="P:pentose-phosphate shunt"/>
    <property type="evidence" value="ECO:0007669"/>
    <property type="project" value="UniProtKB-UniRule"/>
</dbReference>
<dbReference type="CDD" id="cd00956">
    <property type="entry name" value="Transaldolase_FSA"/>
    <property type="match status" value="1"/>
</dbReference>
<dbReference type="FunFam" id="3.20.20.70:FF:000018">
    <property type="entry name" value="Probable transaldolase"/>
    <property type="match status" value="1"/>
</dbReference>
<dbReference type="Gene3D" id="3.20.20.70">
    <property type="entry name" value="Aldolase class I"/>
    <property type="match status" value="1"/>
</dbReference>
<dbReference type="HAMAP" id="MF_00494">
    <property type="entry name" value="Transaldolase_3b"/>
    <property type="match status" value="1"/>
</dbReference>
<dbReference type="InterPro" id="IPR013785">
    <property type="entry name" value="Aldolase_TIM"/>
</dbReference>
<dbReference type="InterPro" id="IPR001585">
    <property type="entry name" value="TAL/FSA"/>
</dbReference>
<dbReference type="InterPro" id="IPR022999">
    <property type="entry name" value="Transaldolase_3B"/>
</dbReference>
<dbReference type="InterPro" id="IPR004731">
    <property type="entry name" value="Transaldolase_3B/F6P_aldolase"/>
</dbReference>
<dbReference type="InterPro" id="IPR018225">
    <property type="entry name" value="Transaldolase_AS"/>
</dbReference>
<dbReference type="InterPro" id="IPR033919">
    <property type="entry name" value="TSA/FSA_arc/bac"/>
</dbReference>
<dbReference type="NCBIfam" id="TIGR00875">
    <property type="entry name" value="fsa_talC_mipB"/>
    <property type="match status" value="1"/>
</dbReference>
<dbReference type="PANTHER" id="PTHR10683:SF40">
    <property type="entry name" value="FRUCTOSE-6-PHOSPHATE ALDOLASE 1-RELATED"/>
    <property type="match status" value="1"/>
</dbReference>
<dbReference type="PANTHER" id="PTHR10683">
    <property type="entry name" value="TRANSALDOLASE"/>
    <property type="match status" value="1"/>
</dbReference>
<dbReference type="Pfam" id="PF00923">
    <property type="entry name" value="TAL_FSA"/>
    <property type="match status" value="1"/>
</dbReference>
<dbReference type="SUPFAM" id="SSF51569">
    <property type="entry name" value="Aldolase"/>
    <property type="match status" value="1"/>
</dbReference>
<dbReference type="PROSITE" id="PS01054">
    <property type="entry name" value="TRANSALDOLASE_1"/>
    <property type="match status" value="1"/>
</dbReference>
<dbReference type="PROSITE" id="PS00958">
    <property type="entry name" value="TRANSALDOLASE_2"/>
    <property type="match status" value="1"/>
</dbReference>
<accession>A7NGG1</accession>
<sequence>MQIYLDTANLDEIRTAASWGVLSGVTTNPSLMAKEKGADFKATIQEIASLVDGPISAEATSLDADGMVREGREFATWHPNVVVKVPSTTEGLKAVSRLARDGIRCNVTLCFNAVQALMAARAGAFIISPFVGRVDDVGVDGMSLIREIVQIYRAHNISTLVLAASIRHPRHIVEAALAGADIATCPFKVLEQSMRHPLTDIGIERFLADWKAWQQGR</sequence>
<name>TAL_ROSCS</name>
<evidence type="ECO:0000255" key="1">
    <source>
        <dbReference type="HAMAP-Rule" id="MF_00494"/>
    </source>
</evidence>
<proteinExistence type="inferred from homology"/>
<feature type="chain" id="PRO_1000126351" description="Probable transaldolase">
    <location>
        <begin position="1"/>
        <end position="217"/>
    </location>
</feature>
<feature type="active site" description="Schiff-base intermediate with substrate" evidence="1">
    <location>
        <position position="84"/>
    </location>
</feature>
<protein>
    <recommendedName>
        <fullName evidence="1">Probable transaldolase</fullName>
        <ecNumber evidence="1">2.2.1.2</ecNumber>
    </recommendedName>
</protein>
<reference key="1">
    <citation type="submission" date="2007-08" db="EMBL/GenBank/DDBJ databases">
        <title>Complete sequence of Roseiflexus castenholzii DSM 13941.</title>
        <authorList>
            <consortium name="US DOE Joint Genome Institute"/>
            <person name="Copeland A."/>
            <person name="Lucas S."/>
            <person name="Lapidus A."/>
            <person name="Barry K."/>
            <person name="Glavina del Rio T."/>
            <person name="Dalin E."/>
            <person name="Tice H."/>
            <person name="Pitluck S."/>
            <person name="Thompson L.S."/>
            <person name="Brettin T."/>
            <person name="Bruce D."/>
            <person name="Detter J.C."/>
            <person name="Han C."/>
            <person name="Tapia R."/>
            <person name="Schmutz J."/>
            <person name="Larimer F."/>
            <person name="Land M."/>
            <person name="Hauser L."/>
            <person name="Kyrpides N."/>
            <person name="Mikhailova N."/>
            <person name="Bryant D.A."/>
            <person name="Hanada S."/>
            <person name="Tsukatani Y."/>
            <person name="Richardson P."/>
        </authorList>
    </citation>
    <scope>NUCLEOTIDE SEQUENCE [LARGE SCALE GENOMIC DNA]</scope>
    <source>
        <strain>DSM 13941 / HLO8</strain>
    </source>
</reference>
<gene>
    <name evidence="1" type="primary">tal</name>
    <name type="ordered locus">Rcas_0417</name>
</gene>
<organism>
    <name type="scientific">Roseiflexus castenholzii (strain DSM 13941 / HLO8)</name>
    <dbReference type="NCBI Taxonomy" id="383372"/>
    <lineage>
        <taxon>Bacteria</taxon>
        <taxon>Bacillati</taxon>
        <taxon>Chloroflexota</taxon>
        <taxon>Chloroflexia</taxon>
        <taxon>Chloroflexales</taxon>
        <taxon>Roseiflexineae</taxon>
        <taxon>Roseiflexaceae</taxon>
        <taxon>Roseiflexus</taxon>
    </lineage>
</organism>
<keyword id="KW-0963">Cytoplasm</keyword>
<keyword id="KW-0570">Pentose shunt</keyword>
<keyword id="KW-1185">Reference proteome</keyword>
<keyword id="KW-0704">Schiff base</keyword>
<keyword id="KW-0808">Transferase</keyword>
<comment type="function">
    <text evidence="1">Transaldolase is important for the balance of metabolites in the pentose-phosphate pathway.</text>
</comment>
<comment type="catalytic activity">
    <reaction evidence="1">
        <text>D-sedoheptulose 7-phosphate + D-glyceraldehyde 3-phosphate = D-erythrose 4-phosphate + beta-D-fructose 6-phosphate</text>
        <dbReference type="Rhea" id="RHEA:17053"/>
        <dbReference type="ChEBI" id="CHEBI:16897"/>
        <dbReference type="ChEBI" id="CHEBI:57483"/>
        <dbReference type="ChEBI" id="CHEBI:57634"/>
        <dbReference type="ChEBI" id="CHEBI:59776"/>
        <dbReference type="EC" id="2.2.1.2"/>
    </reaction>
</comment>
<comment type="pathway">
    <text evidence="1">Carbohydrate degradation; pentose phosphate pathway; D-glyceraldehyde 3-phosphate and beta-D-fructose 6-phosphate from D-ribose 5-phosphate and D-xylulose 5-phosphate (non-oxidative stage): step 2/3.</text>
</comment>
<comment type="subcellular location">
    <subcellularLocation>
        <location evidence="1">Cytoplasm</location>
    </subcellularLocation>
</comment>
<comment type="similarity">
    <text evidence="1">Belongs to the transaldolase family. Type 3B subfamily.</text>
</comment>